<evidence type="ECO:0000255" key="1">
    <source>
        <dbReference type="HAMAP-Rule" id="MF_00645"/>
    </source>
</evidence>
<dbReference type="EMBL" id="CP001399">
    <property type="protein sequence ID" value="ACP36097.1"/>
    <property type="molecule type" value="Genomic_DNA"/>
</dbReference>
<dbReference type="SMR" id="C3MJ10"/>
<dbReference type="KEGG" id="sis:LS215_2104"/>
<dbReference type="HOGENOM" id="CLU_095686_1_1_2"/>
<dbReference type="OrthoDB" id="25187at2157"/>
<dbReference type="Proteomes" id="UP000001747">
    <property type="component" value="Chromosome"/>
</dbReference>
<dbReference type="Gene3D" id="3.30.700.20">
    <property type="entry name" value="Hypothetical protein ph0010, domain 1"/>
    <property type="match status" value="1"/>
</dbReference>
<dbReference type="Gene3D" id="3.30.1490.150">
    <property type="entry name" value="Hypothetical protein ph0010, domain 2"/>
    <property type="match status" value="1"/>
</dbReference>
<dbReference type="HAMAP" id="MF_00645">
    <property type="entry name" value="AMMECR1"/>
    <property type="match status" value="1"/>
</dbReference>
<dbReference type="InterPro" id="IPR023473">
    <property type="entry name" value="AMMECR1"/>
</dbReference>
<dbReference type="InterPro" id="IPR036071">
    <property type="entry name" value="AMMECR1_dom_sf"/>
</dbReference>
<dbReference type="InterPro" id="IPR002733">
    <property type="entry name" value="AMMECR1_domain"/>
</dbReference>
<dbReference type="InterPro" id="IPR027485">
    <property type="entry name" value="AMMECR1_N"/>
</dbReference>
<dbReference type="InterPro" id="IPR027623">
    <property type="entry name" value="AmmeMemoSam_A"/>
</dbReference>
<dbReference type="InterPro" id="IPR023472">
    <property type="entry name" value="Uncharacterised_MJ0810"/>
</dbReference>
<dbReference type="NCBIfam" id="TIGR04335">
    <property type="entry name" value="AmmeMemoSam_A"/>
    <property type="match status" value="1"/>
</dbReference>
<dbReference type="NCBIfam" id="TIGR00296">
    <property type="entry name" value="TIGR00296 family protein"/>
    <property type="match status" value="1"/>
</dbReference>
<dbReference type="PANTHER" id="PTHR13016:SF0">
    <property type="entry name" value="AMME SYNDROME CANDIDATE GENE 1 PROTEIN"/>
    <property type="match status" value="1"/>
</dbReference>
<dbReference type="PANTHER" id="PTHR13016">
    <property type="entry name" value="AMMECR1 HOMOLOG"/>
    <property type="match status" value="1"/>
</dbReference>
<dbReference type="Pfam" id="PF01871">
    <property type="entry name" value="AMMECR1"/>
    <property type="match status" value="1"/>
</dbReference>
<dbReference type="SUPFAM" id="SSF143447">
    <property type="entry name" value="AMMECR1-like"/>
    <property type="match status" value="1"/>
</dbReference>
<dbReference type="PROSITE" id="PS51112">
    <property type="entry name" value="AMMECR1"/>
    <property type="match status" value="1"/>
</dbReference>
<gene>
    <name type="ordered locus">LS215_2104</name>
</gene>
<proteinExistence type="inferred from homology"/>
<accession>C3MJ10</accession>
<organism>
    <name type="scientific">Saccharolobus islandicus (strain L.S.2.15 / Lassen #1)</name>
    <name type="common">Sulfolobus islandicus</name>
    <dbReference type="NCBI Taxonomy" id="429572"/>
    <lineage>
        <taxon>Archaea</taxon>
        <taxon>Thermoproteota</taxon>
        <taxon>Thermoprotei</taxon>
        <taxon>Sulfolobales</taxon>
        <taxon>Sulfolobaceae</taxon>
        <taxon>Saccharolobus</taxon>
    </lineage>
</organism>
<protein>
    <recommendedName>
        <fullName evidence="1">Protein LS215_2104</fullName>
    </recommendedName>
</protein>
<reference key="1">
    <citation type="journal article" date="2009" name="Proc. Natl. Acad. Sci. U.S.A.">
        <title>Biogeography of the Sulfolobus islandicus pan-genome.</title>
        <authorList>
            <person name="Reno M.L."/>
            <person name="Held N.L."/>
            <person name="Fields C.J."/>
            <person name="Burke P.V."/>
            <person name="Whitaker R.J."/>
        </authorList>
    </citation>
    <scope>NUCLEOTIDE SEQUENCE [LARGE SCALE GENOMIC DNA]</scope>
    <source>
        <strain>L.S.2.15 / Lassen #1</strain>
    </source>
</reference>
<feature type="chain" id="PRO_1000212381" description="Protein LS215_2104">
    <location>
        <begin position="1"/>
        <end position="227"/>
    </location>
</feature>
<feature type="domain" description="AMMECR1" evidence="1">
    <location>
        <begin position="15"/>
        <end position="209"/>
    </location>
</feature>
<name>Y2104_SACI2</name>
<sequence length="227" mass="25711">MIQGDLVQIQELNNEIGRFLIEIARKAIKEEFKLDKLDLSNYNNPILDKKGLAFVTLEKITYNTSSLRGCIGYVEAVAPLKQIVASAAKAAAFSDPRFNPLQKDELSEIIIEVTVLTKPEEIKVKDRWDLPKIIKVGEDGLIVEKGILHSGLLLPQVPMEYCWDEETFLAETCIKASLEPDCWLDNSVRIKRFHGIIFRETRPDGSDIIVVKPSDIKCKLNELLNNF</sequence>